<sequence length="176" mass="20150">MNLRQQLGSGLSMAMVLASAFAFWKLFSIVTMSNSPIVVVLSGSMEPAFQRGDVLFLWNREEYVGVGDVVVYKLQEKDIPIVHRVVREHRVMEKDRKTKKKVQKQLLLTKGDNNERDDLPLYAYGQQYLERKKDILGRVFGYVPLVGYVTILITENVYFKYALMALLGLSALVQDE</sequence>
<feature type="chain" id="PRO_0000412349" description="Signal peptidase complex catalytic subunit SEC11">
    <location>
        <begin position="1"/>
        <end position="176"/>
    </location>
</feature>
<feature type="topological domain" description="Cytoplasmic" evidence="4">
    <location>
        <begin position="1"/>
        <end position="9"/>
    </location>
</feature>
<feature type="transmembrane region" description="Helical; Signal-anchor for type II membrane protein" evidence="3">
    <location>
        <begin position="10"/>
        <end position="30"/>
    </location>
</feature>
<feature type="topological domain" description="Lumenal" evidence="4">
    <location>
        <begin position="31"/>
        <end position="176"/>
    </location>
</feature>
<feature type="region of interest" description="C-terminal short (CTS) helix" evidence="2">
    <location>
        <begin position="162"/>
        <end position="173"/>
    </location>
</feature>
<feature type="active site" description="Charge relay system" evidence="1">
    <location>
        <position position="44"/>
    </location>
</feature>
<feature type="active site" description="Charge relay system" evidence="1">
    <location>
        <position position="83"/>
    </location>
</feature>
<feature type="active site" description="Charge relay system" evidence="1">
    <location>
        <position position="118"/>
    </location>
</feature>
<organism>
    <name type="scientific">Ogataea parapolymorpha (strain ATCC 26012 / BCRC 20466 / JCM 22074 / NRRL Y-7560 / DL-1)</name>
    <name type="common">Yeast</name>
    <name type="synonym">Hansenula polymorpha</name>
    <dbReference type="NCBI Taxonomy" id="871575"/>
    <lineage>
        <taxon>Eukaryota</taxon>
        <taxon>Fungi</taxon>
        <taxon>Dikarya</taxon>
        <taxon>Ascomycota</taxon>
        <taxon>Saccharomycotina</taxon>
        <taxon>Pichiomycetes</taxon>
        <taxon>Pichiales</taxon>
        <taxon>Pichiaceae</taxon>
        <taxon>Ogataea</taxon>
    </lineage>
</organism>
<dbReference type="EC" id="3.4.21.89" evidence="1"/>
<dbReference type="EMBL" id="AEOI02000008">
    <property type="protein sequence ID" value="ESW98869.1"/>
    <property type="molecule type" value="Genomic_DNA"/>
</dbReference>
<dbReference type="RefSeq" id="XP_013934752.1">
    <property type="nucleotide sequence ID" value="XM_014079277.1"/>
</dbReference>
<dbReference type="SMR" id="E7R7C4"/>
<dbReference type="STRING" id="871575.E7R7C4"/>
<dbReference type="GeneID" id="25773900"/>
<dbReference type="KEGG" id="opa:HPODL_04472"/>
<dbReference type="eggNOG" id="KOG3342">
    <property type="taxonomic scope" value="Eukaryota"/>
</dbReference>
<dbReference type="HOGENOM" id="CLU_089996_0_0_1"/>
<dbReference type="OMA" id="ILMNEYP"/>
<dbReference type="OrthoDB" id="10257561at2759"/>
<dbReference type="Proteomes" id="UP000008673">
    <property type="component" value="Chromosome V"/>
</dbReference>
<dbReference type="GO" id="GO:0005787">
    <property type="term" value="C:signal peptidase complex"/>
    <property type="evidence" value="ECO:0007669"/>
    <property type="project" value="EnsemblFungi"/>
</dbReference>
<dbReference type="GO" id="GO:0004252">
    <property type="term" value="F:serine-type endopeptidase activity"/>
    <property type="evidence" value="ECO:0007669"/>
    <property type="project" value="UniProtKB-EC"/>
</dbReference>
<dbReference type="GO" id="GO:0045047">
    <property type="term" value="P:protein targeting to ER"/>
    <property type="evidence" value="ECO:0007669"/>
    <property type="project" value="EnsemblFungi"/>
</dbReference>
<dbReference type="GO" id="GO:0006465">
    <property type="term" value="P:signal peptide processing"/>
    <property type="evidence" value="ECO:0007669"/>
    <property type="project" value="EnsemblFungi"/>
</dbReference>
<dbReference type="CDD" id="cd06530">
    <property type="entry name" value="S26_SPase_I"/>
    <property type="match status" value="1"/>
</dbReference>
<dbReference type="InterPro" id="IPR036286">
    <property type="entry name" value="LexA/Signal_pep-like_sf"/>
</dbReference>
<dbReference type="InterPro" id="IPR019756">
    <property type="entry name" value="Pept_S26A_signal_pept_1_Ser-AS"/>
</dbReference>
<dbReference type="InterPro" id="IPR019533">
    <property type="entry name" value="Peptidase_S26"/>
</dbReference>
<dbReference type="InterPro" id="IPR001733">
    <property type="entry name" value="Peptidase_S26B"/>
</dbReference>
<dbReference type="NCBIfam" id="TIGR02228">
    <property type="entry name" value="sigpep_I_arch"/>
    <property type="match status" value="1"/>
</dbReference>
<dbReference type="PANTHER" id="PTHR10806">
    <property type="entry name" value="SIGNAL PEPTIDASE COMPLEX CATALYTIC SUBUNIT SEC11"/>
    <property type="match status" value="1"/>
</dbReference>
<dbReference type="PANTHER" id="PTHR10806:SF6">
    <property type="entry name" value="SIGNAL PEPTIDASE COMPLEX CATALYTIC SUBUNIT SEC11"/>
    <property type="match status" value="1"/>
</dbReference>
<dbReference type="PRINTS" id="PR00728">
    <property type="entry name" value="SIGNALPTASE"/>
</dbReference>
<dbReference type="SUPFAM" id="SSF51306">
    <property type="entry name" value="LexA/Signal peptidase"/>
    <property type="match status" value="1"/>
</dbReference>
<dbReference type="PROSITE" id="PS00501">
    <property type="entry name" value="SPASE_I_1"/>
    <property type="match status" value="1"/>
</dbReference>
<evidence type="ECO:0000250" key="1">
    <source>
        <dbReference type="UniProtKB" id="P15367"/>
    </source>
</evidence>
<evidence type="ECO:0000250" key="2">
    <source>
        <dbReference type="UniProtKB" id="P67812"/>
    </source>
</evidence>
<evidence type="ECO:0000255" key="3"/>
<evidence type="ECO:0000305" key="4"/>
<name>SEC11_OGAPD</name>
<protein>
    <recommendedName>
        <fullName>Signal peptidase complex catalytic subunit SEC11</fullName>
        <ecNumber evidence="1">3.4.21.89</ecNumber>
    </recommendedName>
    <alternativeName>
        <fullName>Signal peptidase I</fullName>
    </alternativeName>
</protein>
<gene>
    <name type="primary">SEC11</name>
    <name type="ORF">HPODL_04472</name>
</gene>
<keyword id="KW-0256">Endoplasmic reticulum</keyword>
<keyword id="KW-0378">Hydrolase</keyword>
<keyword id="KW-0472">Membrane</keyword>
<keyword id="KW-0645">Protease</keyword>
<keyword id="KW-1185">Reference proteome</keyword>
<keyword id="KW-0735">Signal-anchor</keyword>
<keyword id="KW-0812">Transmembrane</keyword>
<keyword id="KW-1133">Transmembrane helix</keyword>
<comment type="function">
    <text evidence="1 2">Catalytic component of the signal peptidase complex (SPC) which catalyzes the cleavage of N-terminal signal sequences from nascent proteins as they are translocated into the lumen of the endoplasmic reticulum (By similarity). Specifically cleaves N-terminal signal peptides that contain a hydrophobic alpha-helix (h-region) shorter than 18-20 amino acids (By similarity).</text>
</comment>
<comment type="catalytic activity">
    <reaction evidence="1">
        <text>Cleavage of hydrophobic, N-terminal signal or leader sequences from secreted and periplasmic proteins.</text>
        <dbReference type="EC" id="3.4.21.89"/>
    </reaction>
</comment>
<comment type="subunit">
    <text evidence="1 2">Component of the signal peptidase complex (SPC) composed of a catalytic subunit SEC11 and three accessory subunits SPC1, SPC2 and SPC3 (By similarity). The complex induces a local thinning of the ER membrane which is used to measure the length of the signal peptide (SP) h-region of protein substrates. This ensures the selectivity of the complex towards h-regions shorter than 18-20 amino acids (By similarity). SPC associates with the translocon complex (By similarity).</text>
</comment>
<comment type="subcellular location">
    <subcellularLocation>
        <location evidence="1">Endoplasmic reticulum membrane</location>
        <topology evidence="1">Single-pass type II membrane protein</topology>
    </subcellularLocation>
</comment>
<comment type="domain">
    <text evidence="2">The C-terminal short (CTS) helix is essential for catalytic activity. It may be accommodated as a transmembrane helix in the thinned membrane environment of the complex, similarly to the signal peptide in the complex substrates.</text>
</comment>
<comment type="similarity">
    <text evidence="4">Belongs to the peptidase S26B family.</text>
</comment>
<accession>E7R7C4</accession>
<accession>W1QE96</accession>
<reference key="1">
    <citation type="journal article" date="2013" name="BMC Genomics">
        <title>Genome sequence and analysis of methylotrophic yeast Hansenula polymorpha DL1.</title>
        <authorList>
            <person name="Ravin N.V."/>
            <person name="Eldarov M.A."/>
            <person name="Kadnikov V.V."/>
            <person name="Beletsky A.V."/>
            <person name="Schneider J."/>
            <person name="Mardanova E.S."/>
            <person name="Smekalova E.M."/>
            <person name="Zvereva M.I."/>
            <person name="Dontsova O.A."/>
            <person name="Mardanov A.V."/>
            <person name="Skryabin K.G."/>
        </authorList>
    </citation>
    <scope>NUCLEOTIDE SEQUENCE [LARGE SCALE GENOMIC DNA]</scope>
    <source>
        <strain>ATCC 26012 / BCRC 20466 / JCM 22074 / NRRL Y-7560 / DL-1</strain>
    </source>
</reference>
<proteinExistence type="inferred from homology"/>